<organism>
    <name type="scientific">Escherichia coli (strain UTI89 / UPEC)</name>
    <dbReference type="NCBI Taxonomy" id="364106"/>
    <lineage>
        <taxon>Bacteria</taxon>
        <taxon>Pseudomonadati</taxon>
        <taxon>Pseudomonadota</taxon>
        <taxon>Gammaproteobacteria</taxon>
        <taxon>Enterobacterales</taxon>
        <taxon>Enterobacteriaceae</taxon>
        <taxon>Escherichia</taxon>
    </lineage>
</organism>
<reference key="1">
    <citation type="journal article" date="2006" name="Proc. Natl. Acad. Sci. U.S.A.">
        <title>Identification of genes subject to positive selection in uropathogenic strains of Escherichia coli: a comparative genomics approach.</title>
        <authorList>
            <person name="Chen S.L."/>
            <person name="Hung C.-S."/>
            <person name="Xu J."/>
            <person name="Reigstad C.S."/>
            <person name="Magrini V."/>
            <person name="Sabo A."/>
            <person name="Blasiar D."/>
            <person name="Bieri T."/>
            <person name="Meyer R.R."/>
            <person name="Ozersky P."/>
            <person name="Armstrong J.R."/>
            <person name="Fulton R.S."/>
            <person name="Latreille J.P."/>
            <person name="Spieth J."/>
            <person name="Hooton T.M."/>
            <person name="Mardis E.R."/>
            <person name="Hultgren S.J."/>
            <person name="Gordon J.I."/>
        </authorList>
    </citation>
    <scope>NUCLEOTIDE SEQUENCE [LARGE SCALE GENOMIC DNA]</scope>
    <source>
        <strain>UTI89 / UPEC</strain>
    </source>
</reference>
<protein>
    <recommendedName>
        <fullName evidence="1">5'-deoxynucleotidase YfbR</fullName>
        <ecNumber evidence="1">3.1.3.89</ecNumber>
    </recommendedName>
    <alternativeName>
        <fullName evidence="1">5'-deoxyribonucleotidase</fullName>
    </alternativeName>
    <alternativeName>
        <fullName evidence="1">Nucleoside 5'-monophosphate phosphohydrolase</fullName>
    </alternativeName>
</protein>
<evidence type="ECO:0000255" key="1">
    <source>
        <dbReference type="HAMAP-Rule" id="MF_01100"/>
    </source>
</evidence>
<evidence type="ECO:0000255" key="2">
    <source>
        <dbReference type="PROSITE-ProRule" id="PRU01175"/>
    </source>
</evidence>
<name>5DNU_ECOUT</name>
<keyword id="KW-0963">Cytoplasm</keyword>
<keyword id="KW-0378">Hydrolase</keyword>
<keyword id="KW-0479">Metal-binding</keyword>
<keyword id="KW-0547">Nucleotide-binding</keyword>
<comment type="function">
    <text evidence="1">Catalyzes the strictly specific dephosphorylation of 2'-deoxyribonucleoside 5'-monophosphates.</text>
</comment>
<comment type="catalytic activity">
    <reaction evidence="1">
        <text>a 2'-deoxyribonucleoside 5'-phosphate + H2O = a 2'-deoxyribonucleoside + phosphate</text>
        <dbReference type="Rhea" id="RHEA:36167"/>
        <dbReference type="ChEBI" id="CHEBI:15377"/>
        <dbReference type="ChEBI" id="CHEBI:18274"/>
        <dbReference type="ChEBI" id="CHEBI:43474"/>
        <dbReference type="ChEBI" id="CHEBI:65317"/>
        <dbReference type="EC" id="3.1.3.89"/>
    </reaction>
</comment>
<comment type="cofactor">
    <cofactor evidence="1">
        <name>a divalent metal cation</name>
        <dbReference type="ChEBI" id="CHEBI:60240"/>
    </cofactor>
</comment>
<comment type="subunit">
    <text evidence="1">Homodimer.</text>
</comment>
<comment type="subcellular location">
    <subcellularLocation>
        <location evidence="1">Cytoplasm</location>
    </subcellularLocation>
</comment>
<comment type="similarity">
    <text evidence="1">Belongs to the 5DNU family.</text>
</comment>
<sequence length="199" mass="22666">MKQSHFFAHLSRLKLINRWPLMRNVRTENVSEHSLQVAMVAHALAAIKNRKFGGNVNAERIALLAMYHDASEVLTGDLPTPVKYFNSQIAQEYKAIEKIAQQKLVDMVPEELQDIFAPLIDEHAYSDEEKSLVKQADALCAYLKCLEELAAGNNEFLLAKTRLEATLEARRSQEMDYFMEVFVPSFHLSLDEISQDSPL</sequence>
<feature type="chain" id="PRO_1000064952" description="5'-deoxynucleotidase YfbR">
    <location>
        <begin position="1"/>
        <end position="199"/>
    </location>
</feature>
<feature type="domain" description="HD" evidence="2">
    <location>
        <begin position="30"/>
        <end position="142"/>
    </location>
</feature>
<feature type="binding site" evidence="1">
    <location>
        <begin position="18"/>
        <end position="19"/>
    </location>
    <ligand>
        <name>substrate</name>
    </ligand>
</feature>
<feature type="binding site" evidence="1">
    <location>
        <position position="33"/>
    </location>
    <ligand>
        <name>a divalent metal cation</name>
        <dbReference type="ChEBI" id="CHEBI:60240"/>
    </ligand>
</feature>
<feature type="binding site" evidence="1">
    <location>
        <position position="33"/>
    </location>
    <ligand>
        <name>substrate</name>
    </ligand>
</feature>
<feature type="binding site" evidence="1">
    <location>
        <position position="68"/>
    </location>
    <ligand>
        <name>a divalent metal cation</name>
        <dbReference type="ChEBI" id="CHEBI:60240"/>
    </ligand>
</feature>
<feature type="binding site" evidence="1">
    <location>
        <position position="69"/>
    </location>
    <ligand>
        <name>a divalent metal cation</name>
        <dbReference type="ChEBI" id="CHEBI:60240"/>
    </ligand>
</feature>
<feature type="binding site" evidence="1">
    <location>
        <position position="69"/>
    </location>
    <ligand>
        <name>substrate</name>
    </ligand>
</feature>
<feature type="binding site" evidence="1">
    <location>
        <begin position="77"/>
        <end position="80"/>
    </location>
    <ligand>
        <name>substrate</name>
    </ligand>
</feature>
<feature type="binding site" evidence="1">
    <location>
        <position position="137"/>
    </location>
    <ligand>
        <name>a divalent metal cation</name>
        <dbReference type="ChEBI" id="CHEBI:60240"/>
    </ligand>
</feature>
<feature type="binding site" evidence="1">
    <location>
        <position position="137"/>
    </location>
    <ligand>
        <name>substrate</name>
    </ligand>
</feature>
<feature type="site" description="Appears to be important in orienting the phosphate for catalysis" evidence="1">
    <location>
        <position position="18"/>
    </location>
</feature>
<accession>Q1R9C4</accession>
<dbReference type="EC" id="3.1.3.89" evidence="1"/>
<dbReference type="EMBL" id="CP000243">
    <property type="protein sequence ID" value="ABE08040.1"/>
    <property type="molecule type" value="Genomic_DNA"/>
</dbReference>
<dbReference type="RefSeq" id="WP_000813854.1">
    <property type="nucleotide sequence ID" value="NZ_CP064825.1"/>
</dbReference>
<dbReference type="SMR" id="Q1R9C4"/>
<dbReference type="KEGG" id="eci:UTI89_C2573"/>
<dbReference type="HOGENOM" id="CLU_084784_0_0_6"/>
<dbReference type="Proteomes" id="UP000001952">
    <property type="component" value="Chromosome"/>
</dbReference>
<dbReference type="GO" id="GO:0005737">
    <property type="term" value="C:cytoplasm"/>
    <property type="evidence" value="ECO:0007669"/>
    <property type="project" value="UniProtKB-SubCell"/>
</dbReference>
<dbReference type="GO" id="GO:0002953">
    <property type="term" value="F:5'-deoxynucleotidase activity"/>
    <property type="evidence" value="ECO:0007669"/>
    <property type="project" value="UniProtKB-EC"/>
</dbReference>
<dbReference type="GO" id="GO:0046872">
    <property type="term" value="F:metal ion binding"/>
    <property type="evidence" value="ECO:0007669"/>
    <property type="project" value="UniProtKB-KW"/>
</dbReference>
<dbReference type="GO" id="GO:0000166">
    <property type="term" value="F:nucleotide binding"/>
    <property type="evidence" value="ECO:0007669"/>
    <property type="project" value="UniProtKB-KW"/>
</dbReference>
<dbReference type="CDD" id="cd00077">
    <property type="entry name" value="HDc"/>
    <property type="match status" value="1"/>
</dbReference>
<dbReference type="FunFam" id="1.10.3210.10:FF:000002">
    <property type="entry name" value="Nucleotidase YfbR"/>
    <property type="match status" value="1"/>
</dbReference>
<dbReference type="Gene3D" id="1.10.3210.10">
    <property type="entry name" value="Hypothetical protein af1432"/>
    <property type="match status" value="1"/>
</dbReference>
<dbReference type="HAMAP" id="MF_01100">
    <property type="entry name" value="5DNU"/>
    <property type="match status" value="1"/>
</dbReference>
<dbReference type="InterPro" id="IPR003607">
    <property type="entry name" value="HD/PDEase_dom"/>
</dbReference>
<dbReference type="InterPro" id="IPR006674">
    <property type="entry name" value="HD_domain"/>
</dbReference>
<dbReference type="InterPro" id="IPR022971">
    <property type="entry name" value="YfbR"/>
</dbReference>
<dbReference type="InterPro" id="IPR039356">
    <property type="entry name" value="YfbR/HDDC2"/>
</dbReference>
<dbReference type="NCBIfam" id="NF003009">
    <property type="entry name" value="PRK03826.1"/>
    <property type="match status" value="1"/>
</dbReference>
<dbReference type="PANTHER" id="PTHR11845">
    <property type="entry name" value="5'-DEOXYNUCLEOTIDASE HDDC2"/>
    <property type="match status" value="1"/>
</dbReference>
<dbReference type="PANTHER" id="PTHR11845:SF13">
    <property type="entry name" value="5'-DEOXYNUCLEOTIDASE HDDC2"/>
    <property type="match status" value="1"/>
</dbReference>
<dbReference type="Pfam" id="PF12917">
    <property type="entry name" value="YfbR-like"/>
    <property type="match status" value="1"/>
</dbReference>
<dbReference type="SMART" id="SM00471">
    <property type="entry name" value="HDc"/>
    <property type="match status" value="1"/>
</dbReference>
<dbReference type="SUPFAM" id="SSF109604">
    <property type="entry name" value="HD-domain/PDEase-like"/>
    <property type="match status" value="1"/>
</dbReference>
<dbReference type="PROSITE" id="PS51831">
    <property type="entry name" value="HD"/>
    <property type="match status" value="1"/>
</dbReference>
<proteinExistence type="inferred from homology"/>
<gene>
    <name evidence="1" type="primary">yfbR</name>
    <name type="ordered locus">UTI89_C2573</name>
</gene>